<keyword id="KW-0687">Ribonucleoprotein</keyword>
<keyword id="KW-0689">Ribosomal protein</keyword>
<name>RL30_BUCA5</name>
<sequence length="59" mass="6729">MKNIKITQIKSAIGRLPKHKKTLIGLGLRYIGHTVIREDTPSIQGMVKKISYILKIQEE</sequence>
<protein>
    <recommendedName>
        <fullName evidence="1">Large ribosomal subunit protein uL30</fullName>
    </recommendedName>
    <alternativeName>
        <fullName evidence="2">50S ribosomal protein L30</fullName>
    </alternativeName>
</protein>
<reference key="1">
    <citation type="journal article" date="2009" name="Science">
        <title>The dynamics and time scale of ongoing genomic erosion in symbiotic bacteria.</title>
        <authorList>
            <person name="Moran N.A."/>
            <person name="McLaughlin H.J."/>
            <person name="Sorek R."/>
        </authorList>
    </citation>
    <scope>NUCLEOTIDE SEQUENCE [LARGE SCALE GENOMIC DNA]</scope>
    <source>
        <strain>5A</strain>
    </source>
</reference>
<comment type="subunit">
    <text evidence="1">Part of the 50S ribosomal subunit.</text>
</comment>
<comment type="similarity">
    <text evidence="1">Belongs to the universal ribosomal protein uL30 family.</text>
</comment>
<proteinExistence type="inferred from homology"/>
<feature type="chain" id="PRO_1000184130" description="Large ribosomal subunit protein uL30">
    <location>
        <begin position="1"/>
        <end position="59"/>
    </location>
</feature>
<accession>B8D9S9</accession>
<dbReference type="EMBL" id="CP001161">
    <property type="protein sequence ID" value="ACL30850.1"/>
    <property type="molecule type" value="Genomic_DNA"/>
</dbReference>
<dbReference type="RefSeq" id="WP_009874457.1">
    <property type="nucleotide sequence ID" value="NC_011833.1"/>
</dbReference>
<dbReference type="SMR" id="B8D9S9"/>
<dbReference type="KEGG" id="bap:BUAP5A_499"/>
<dbReference type="HOGENOM" id="CLU_131047_1_4_6"/>
<dbReference type="OrthoDB" id="9812790at2"/>
<dbReference type="Proteomes" id="UP000006904">
    <property type="component" value="Chromosome"/>
</dbReference>
<dbReference type="GO" id="GO:0022625">
    <property type="term" value="C:cytosolic large ribosomal subunit"/>
    <property type="evidence" value="ECO:0007669"/>
    <property type="project" value="TreeGrafter"/>
</dbReference>
<dbReference type="GO" id="GO:0003735">
    <property type="term" value="F:structural constituent of ribosome"/>
    <property type="evidence" value="ECO:0007669"/>
    <property type="project" value="InterPro"/>
</dbReference>
<dbReference type="GO" id="GO:0006412">
    <property type="term" value="P:translation"/>
    <property type="evidence" value="ECO:0007669"/>
    <property type="project" value="UniProtKB-UniRule"/>
</dbReference>
<dbReference type="CDD" id="cd01658">
    <property type="entry name" value="Ribosomal_L30"/>
    <property type="match status" value="1"/>
</dbReference>
<dbReference type="FunFam" id="3.30.1390.20:FF:000001">
    <property type="entry name" value="50S ribosomal protein L30"/>
    <property type="match status" value="1"/>
</dbReference>
<dbReference type="Gene3D" id="3.30.1390.20">
    <property type="entry name" value="Ribosomal protein L30, ferredoxin-like fold domain"/>
    <property type="match status" value="1"/>
</dbReference>
<dbReference type="HAMAP" id="MF_01371_B">
    <property type="entry name" value="Ribosomal_uL30_B"/>
    <property type="match status" value="1"/>
</dbReference>
<dbReference type="InterPro" id="IPR036919">
    <property type="entry name" value="Ribo_uL30_ferredoxin-like_sf"/>
</dbReference>
<dbReference type="InterPro" id="IPR005996">
    <property type="entry name" value="Ribosomal_uL30_bac-type"/>
</dbReference>
<dbReference type="InterPro" id="IPR016082">
    <property type="entry name" value="Ribosomal_uL30_ferredoxin-like"/>
</dbReference>
<dbReference type="NCBIfam" id="TIGR01308">
    <property type="entry name" value="rpmD_bact"/>
    <property type="match status" value="1"/>
</dbReference>
<dbReference type="PANTHER" id="PTHR15892:SF2">
    <property type="entry name" value="LARGE RIBOSOMAL SUBUNIT PROTEIN UL30M"/>
    <property type="match status" value="1"/>
</dbReference>
<dbReference type="PANTHER" id="PTHR15892">
    <property type="entry name" value="MITOCHONDRIAL RIBOSOMAL PROTEIN L30"/>
    <property type="match status" value="1"/>
</dbReference>
<dbReference type="Pfam" id="PF00327">
    <property type="entry name" value="Ribosomal_L30"/>
    <property type="match status" value="1"/>
</dbReference>
<dbReference type="PIRSF" id="PIRSF002211">
    <property type="entry name" value="Ribosomal_L30_bac-type"/>
    <property type="match status" value="1"/>
</dbReference>
<dbReference type="SUPFAM" id="SSF55129">
    <property type="entry name" value="Ribosomal protein L30p/L7e"/>
    <property type="match status" value="1"/>
</dbReference>
<organism>
    <name type="scientific">Buchnera aphidicola subsp. Acyrthosiphon pisum (strain 5A)</name>
    <dbReference type="NCBI Taxonomy" id="563178"/>
    <lineage>
        <taxon>Bacteria</taxon>
        <taxon>Pseudomonadati</taxon>
        <taxon>Pseudomonadota</taxon>
        <taxon>Gammaproteobacteria</taxon>
        <taxon>Enterobacterales</taxon>
        <taxon>Erwiniaceae</taxon>
        <taxon>Buchnera</taxon>
    </lineage>
</organism>
<evidence type="ECO:0000255" key="1">
    <source>
        <dbReference type="HAMAP-Rule" id="MF_01371"/>
    </source>
</evidence>
<evidence type="ECO:0000305" key="2"/>
<gene>
    <name evidence="1" type="primary">rpmD</name>
    <name type="ordered locus">BUAP5A_499</name>
</gene>